<accession>B4T0Y6</accession>
<feature type="chain" id="PRO_1000141457" description="Large ribosomal subunit protein uL1">
    <location>
        <begin position="1"/>
        <end position="234"/>
    </location>
</feature>
<gene>
    <name evidence="1" type="primary">rplA</name>
    <name type="ordered locus">SNSL254_A4482</name>
</gene>
<evidence type="ECO:0000255" key="1">
    <source>
        <dbReference type="HAMAP-Rule" id="MF_01318"/>
    </source>
</evidence>
<evidence type="ECO:0000305" key="2"/>
<protein>
    <recommendedName>
        <fullName evidence="1">Large ribosomal subunit protein uL1</fullName>
    </recommendedName>
    <alternativeName>
        <fullName evidence="2">50S ribosomal protein L1</fullName>
    </alternativeName>
</protein>
<proteinExistence type="inferred from homology"/>
<organism>
    <name type="scientific">Salmonella newport (strain SL254)</name>
    <dbReference type="NCBI Taxonomy" id="423368"/>
    <lineage>
        <taxon>Bacteria</taxon>
        <taxon>Pseudomonadati</taxon>
        <taxon>Pseudomonadota</taxon>
        <taxon>Gammaproteobacteria</taxon>
        <taxon>Enterobacterales</taxon>
        <taxon>Enterobacteriaceae</taxon>
        <taxon>Salmonella</taxon>
    </lineage>
</organism>
<keyword id="KW-0678">Repressor</keyword>
<keyword id="KW-0687">Ribonucleoprotein</keyword>
<keyword id="KW-0689">Ribosomal protein</keyword>
<keyword id="KW-0694">RNA-binding</keyword>
<keyword id="KW-0699">rRNA-binding</keyword>
<keyword id="KW-0810">Translation regulation</keyword>
<keyword id="KW-0820">tRNA-binding</keyword>
<reference key="1">
    <citation type="journal article" date="2011" name="J. Bacteriol.">
        <title>Comparative genomics of 28 Salmonella enterica isolates: evidence for CRISPR-mediated adaptive sublineage evolution.</title>
        <authorList>
            <person name="Fricke W.F."/>
            <person name="Mammel M.K."/>
            <person name="McDermott P.F."/>
            <person name="Tartera C."/>
            <person name="White D.G."/>
            <person name="Leclerc J.E."/>
            <person name="Ravel J."/>
            <person name="Cebula T.A."/>
        </authorList>
    </citation>
    <scope>NUCLEOTIDE SEQUENCE [LARGE SCALE GENOMIC DNA]</scope>
    <source>
        <strain>SL254</strain>
    </source>
</reference>
<dbReference type="EMBL" id="CP001113">
    <property type="protein sequence ID" value="ACF64195.1"/>
    <property type="molecule type" value="Genomic_DNA"/>
</dbReference>
<dbReference type="RefSeq" id="WP_001096676.1">
    <property type="nucleotide sequence ID" value="NZ_CCMR01000001.1"/>
</dbReference>
<dbReference type="SMR" id="B4T0Y6"/>
<dbReference type="KEGG" id="see:SNSL254_A4482"/>
<dbReference type="HOGENOM" id="CLU_062853_0_0_6"/>
<dbReference type="Proteomes" id="UP000008824">
    <property type="component" value="Chromosome"/>
</dbReference>
<dbReference type="GO" id="GO:0022625">
    <property type="term" value="C:cytosolic large ribosomal subunit"/>
    <property type="evidence" value="ECO:0007669"/>
    <property type="project" value="TreeGrafter"/>
</dbReference>
<dbReference type="GO" id="GO:0019843">
    <property type="term" value="F:rRNA binding"/>
    <property type="evidence" value="ECO:0007669"/>
    <property type="project" value="UniProtKB-UniRule"/>
</dbReference>
<dbReference type="GO" id="GO:0003735">
    <property type="term" value="F:structural constituent of ribosome"/>
    <property type="evidence" value="ECO:0007669"/>
    <property type="project" value="InterPro"/>
</dbReference>
<dbReference type="GO" id="GO:0000049">
    <property type="term" value="F:tRNA binding"/>
    <property type="evidence" value="ECO:0007669"/>
    <property type="project" value="UniProtKB-KW"/>
</dbReference>
<dbReference type="GO" id="GO:0006417">
    <property type="term" value="P:regulation of translation"/>
    <property type="evidence" value="ECO:0007669"/>
    <property type="project" value="UniProtKB-KW"/>
</dbReference>
<dbReference type="GO" id="GO:0006412">
    <property type="term" value="P:translation"/>
    <property type="evidence" value="ECO:0007669"/>
    <property type="project" value="UniProtKB-UniRule"/>
</dbReference>
<dbReference type="CDD" id="cd00403">
    <property type="entry name" value="Ribosomal_L1"/>
    <property type="match status" value="1"/>
</dbReference>
<dbReference type="FunFam" id="3.40.50.790:FF:000001">
    <property type="entry name" value="50S ribosomal protein L1"/>
    <property type="match status" value="1"/>
</dbReference>
<dbReference type="Gene3D" id="3.30.190.20">
    <property type="match status" value="1"/>
</dbReference>
<dbReference type="Gene3D" id="3.40.50.790">
    <property type="match status" value="1"/>
</dbReference>
<dbReference type="HAMAP" id="MF_01318_B">
    <property type="entry name" value="Ribosomal_uL1_B"/>
    <property type="match status" value="1"/>
</dbReference>
<dbReference type="InterPro" id="IPR005878">
    <property type="entry name" value="Ribosom_uL1_bac-type"/>
</dbReference>
<dbReference type="InterPro" id="IPR002143">
    <property type="entry name" value="Ribosomal_uL1"/>
</dbReference>
<dbReference type="InterPro" id="IPR023674">
    <property type="entry name" value="Ribosomal_uL1-like"/>
</dbReference>
<dbReference type="InterPro" id="IPR028364">
    <property type="entry name" value="Ribosomal_uL1/biogenesis"/>
</dbReference>
<dbReference type="InterPro" id="IPR016095">
    <property type="entry name" value="Ribosomal_uL1_3-a/b-sand"/>
</dbReference>
<dbReference type="InterPro" id="IPR023673">
    <property type="entry name" value="Ribosomal_uL1_CS"/>
</dbReference>
<dbReference type="NCBIfam" id="TIGR01169">
    <property type="entry name" value="rplA_bact"/>
    <property type="match status" value="1"/>
</dbReference>
<dbReference type="PANTHER" id="PTHR36427">
    <property type="entry name" value="54S RIBOSOMAL PROTEIN L1, MITOCHONDRIAL"/>
    <property type="match status" value="1"/>
</dbReference>
<dbReference type="PANTHER" id="PTHR36427:SF3">
    <property type="entry name" value="LARGE RIBOSOMAL SUBUNIT PROTEIN UL1M"/>
    <property type="match status" value="1"/>
</dbReference>
<dbReference type="Pfam" id="PF00687">
    <property type="entry name" value="Ribosomal_L1"/>
    <property type="match status" value="1"/>
</dbReference>
<dbReference type="PIRSF" id="PIRSF002155">
    <property type="entry name" value="Ribosomal_L1"/>
    <property type="match status" value="1"/>
</dbReference>
<dbReference type="SUPFAM" id="SSF56808">
    <property type="entry name" value="Ribosomal protein L1"/>
    <property type="match status" value="1"/>
</dbReference>
<dbReference type="PROSITE" id="PS01199">
    <property type="entry name" value="RIBOSOMAL_L1"/>
    <property type="match status" value="1"/>
</dbReference>
<sequence>MAKLTKRMRVIREKVDATKQYDINEAIALLKELATAKFNESVDVAVNLGIDARKSDQNVRGATVLPHGTGRSVRVAVFTQGPNAEAAKAAGAELVGMEDLADQIKKGEMNFDVVIASPDAMRVVGQLGQVLGPRGLMPNPKVGTVTPNVAEAVKNAKAGQVRYRNDKNGIIHTTIGKVDFDADKLKENLEALLVALKKAKPSQAKGVYIKKVSISTTMGAGVAVDQAGLSASAN</sequence>
<comment type="function">
    <text evidence="1">Binds directly to 23S rRNA. The L1 stalk is quite mobile in the ribosome, and is involved in E site tRNA release.</text>
</comment>
<comment type="function">
    <text evidence="1">Protein L1 is also a translational repressor protein, it controls the translation of the L11 operon by binding to its mRNA.</text>
</comment>
<comment type="subunit">
    <text evidence="1">Part of the 50S ribosomal subunit.</text>
</comment>
<comment type="similarity">
    <text evidence="1">Belongs to the universal ribosomal protein uL1 family.</text>
</comment>
<name>RL1_SALNS</name>